<keyword id="KW-0002">3D-structure</keyword>
<keyword id="KW-0008">Acetylcholine receptor inhibiting toxin</keyword>
<keyword id="KW-0027">Amidation</keyword>
<keyword id="KW-0903">Direct protein sequencing</keyword>
<keyword id="KW-1015">Disulfide bond</keyword>
<keyword id="KW-0872">Ion channel impairing toxin</keyword>
<keyword id="KW-0528">Neurotoxin</keyword>
<keyword id="KW-0629">Postsynaptic neurotoxin</keyword>
<keyword id="KW-0873">Pyrrolidone carboxylic acid</keyword>
<keyword id="KW-0964">Secreted</keyword>
<keyword id="KW-0800">Toxin</keyword>
<keyword id="KW-0738">Voltage-gated sodium channel impairing toxin</keyword>
<sequence>QGCCNGPKGCSSKWCRDHARCC</sequence>
<protein>
    <recommendedName>
        <fullName evidence="3">Mu-conotoxin CnIIIC</fullName>
    </recommendedName>
</protein>
<comment type="function">
    <text evidence="1">Mu-conotoxins block voltage-gated sodium channels (Nav). This synthetic toxin blocks both voltage-gated sodium channels and nicotinic acetylcholine receptor (nAChR). Inhibits the skeletal muscle rNav1.4/SCN4A (IC(50)=1.3 nM) and the brain rNav1.2/SCN2A in a long-lasting manner. A low inhibition is also observed on neuronal mNav1.6/SCN8A and mNav1.7/SCN9A. Modestly blocks nAChR alpha-3/beta-2 subtype (IC(50)=450 nM) (partially reversible) and, to a lesser extent, alpha-7 and alpha-4/beta-2 subtypes (reversible). In vitro, decreases twitch tension in mouse hemidiaphragms (IC(50)=150 nM), and displays a high blocking effect in mouse extensor digitorum longus muscles (IC(50)=46 nM).</text>
</comment>
<comment type="subcellular location">
    <subcellularLocation>
        <location>Secreted</location>
    </subcellularLocation>
</comment>
<comment type="tissue specificity">
    <text>Expressed by the venom duct.</text>
</comment>
<comment type="domain">
    <text>The cysteine framework is III (CC-C-C-CC). Classified in the M-5 branch, since 5 residues stand between the fourth and the fifth cysteine residues.</text>
</comment>
<comment type="mass spectrometry">
    <text>CnIIIC, monoisotopic.</text>
</comment>
<comment type="mass spectrometry">
    <text>CnIIIC.</text>
</comment>
<comment type="mass spectrometry">
    <text>[Gln1]-CnIIIC.</text>
</comment>
<comment type="biotechnology">
    <text evidence="6">Is commercialized under the name XEP-018 by Activen in the cosmetic area. When applied as a cream, it is claimed to reduce fine-line wrinkles.</text>
</comment>
<comment type="miscellaneous">
    <text evidence="5">Negative results: 1 uM does not block cardiac mNav1.5/SCN5A and DRG-specific rNav1.8/SCN10A channels. 5 uM does not block voltage-gated potassium channels rKv1.1/KCNA1, rKv1.2/KCNA2, hKv1.3/KCNA3, rKv1.4/KCNA4, rKv1.5/KCNA5, rKv1.6/KCNA6, Shaker, hERG1/KCNH2 (PubMed:22229737).</text>
</comment>
<comment type="miscellaneous">
    <text>Found in both injectable (milked) (IV) and dissected venom (DV) (PubMed:22229737, PubMed:22705119).</text>
</comment>
<comment type="similarity">
    <text evidence="4">Belongs to the conotoxin M superfamily.</text>
</comment>
<proteinExistence type="evidence at protein level"/>
<feature type="peptide" id="PRO_0000419876" description="Mu-conotoxin CnIIIC" evidence="1">
    <location>
        <begin position="1"/>
        <end position="22"/>
    </location>
</feature>
<feature type="modified residue" description="Pyrrolidone carboxylic acid; partial" evidence="1 2">
    <location>
        <position position="1"/>
    </location>
</feature>
<feature type="modified residue" description="Cysteine amide" evidence="2">
    <location>
        <position position="22"/>
    </location>
</feature>
<feature type="disulfide bond" evidence="1">
    <location>
        <begin position="3"/>
        <end position="15"/>
    </location>
</feature>
<feature type="disulfide bond" evidence="1">
    <location>
        <begin position="4"/>
        <end position="21"/>
    </location>
</feature>
<feature type="disulfide bond" evidence="1">
    <location>
        <begin position="10"/>
        <end position="22"/>
    </location>
</feature>
<feature type="turn" evidence="7">
    <location>
        <begin position="3"/>
        <end position="5"/>
    </location>
</feature>
<feature type="helix" evidence="7">
    <location>
        <begin position="9"/>
        <end position="11"/>
    </location>
</feature>
<feature type="helix" evidence="7">
    <location>
        <begin position="13"/>
        <end position="18"/>
    </location>
</feature>
<name>GM3C_CONCN</name>
<accession>I1SB07</accession>
<organism>
    <name type="scientific">Conus consors</name>
    <name type="common">Singed cone</name>
    <dbReference type="NCBI Taxonomy" id="101297"/>
    <lineage>
        <taxon>Eukaryota</taxon>
        <taxon>Metazoa</taxon>
        <taxon>Spiralia</taxon>
        <taxon>Lophotrochozoa</taxon>
        <taxon>Mollusca</taxon>
        <taxon>Gastropoda</taxon>
        <taxon>Caenogastropoda</taxon>
        <taxon>Neogastropoda</taxon>
        <taxon>Conoidea</taxon>
        <taxon>Conidae</taxon>
        <taxon>Conus</taxon>
        <taxon>Pionoconus</taxon>
    </lineage>
</organism>
<dbReference type="PDB" id="2YEN">
    <property type="method" value="NMR"/>
    <property type="chains" value="A=2-22"/>
</dbReference>
<dbReference type="PDBsum" id="2YEN"/>
<dbReference type="SMR" id="I1SB07"/>
<dbReference type="ConoServer" id="3834">
    <property type="toxin name" value="CnIIIC"/>
</dbReference>
<dbReference type="EvolutionaryTrace" id="I1SB07"/>
<dbReference type="GO" id="GO:0005576">
    <property type="term" value="C:extracellular region"/>
    <property type="evidence" value="ECO:0007669"/>
    <property type="project" value="UniProtKB-SubCell"/>
</dbReference>
<dbReference type="GO" id="GO:0035792">
    <property type="term" value="C:host cell postsynaptic membrane"/>
    <property type="evidence" value="ECO:0007669"/>
    <property type="project" value="UniProtKB-KW"/>
</dbReference>
<dbReference type="GO" id="GO:0030550">
    <property type="term" value="F:acetylcholine receptor inhibitor activity"/>
    <property type="evidence" value="ECO:0007669"/>
    <property type="project" value="UniProtKB-KW"/>
</dbReference>
<dbReference type="GO" id="GO:0019871">
    <property type="term" value="F:sodium channel inhibitor activity"/>
    <property type="evidence" value="ECO:0007669"/>
    <property type="project" value="InterPro"/>
</dbReference>
<dbReference type="GO" id="GO:0090729">
    <property type="term" value="F:toxin activity"/>
    <property type="evidence" value="ECO:0007669"/>
    <property type="project" value="UniProtKB-KW"/>
</dbReference>
<dbReference type="InterPro" id="IPR008036">
    <property type="entry name" value="Conotoxin_mu-typ"/>
</dbReference>
<dbReference type="PROSITE" id="PS60013">
    <property type="entry name" value="MU_CONOTOXIN"/>
    <property type="match status" value="1"/>
</dbReference>
<evidence type="ECO:0000269" key="1">
    <source>
    </source>
</evidence>
<evidence type="ECO:0000269" key="2">
    <source>
    </source>
</evidence>
<evidence type="ECO:0000303" key="3">
    <source>
    </source>
</evidence>
<evidence type="ECO:0000305" key="4"/>
<evidence type="ECO:0000305" key="5">
    <source>
    </source>
</evidence>
<evidence type="ECO:0000305" key="6">
    <source>
    </source>
</evidence>
<evidence type="ECO:0007829" key="7">
    <source>
        <dbReference type="PDB" id="2YEN"/>
    </source>
</evidence>
<reference key="1">
    <citation type="journal article" date="2012" name="Br. J. Pharmacol.">
        <title>A novel u-conopeptide, CnIIIC, exerts potent and preferential inhibition of NaV1.2/1.4 channels and blocks neuronal nicotinic acetylcholine receptors.</title>
        <authorList>
            <person name="Favreau P."/>
            <person name="Benoit E."/>
            <person name="Hocking H.G."/>
            <person name="Carlier L."/>
            <person name="D'Hoedt D."/>
            <person name="Leipold E."/>
            <person name="Markgraf R."/>
            <person name="Schlumberger S."/>
            <person name="Cordova M.A."/>
            <person name="Gaertner H."/>
            <person name="Paolini-Bertrand M."/>
            <person name="Hartley O."/>
            <person name="Tytgat J."/>
            <person name="Heinemann S.H."/>
            <person name="Bertrand D."/>
            <person name="Boelens R."/>
            <person name="Stocklin R."/>
            <person name="Molgo J."/>
        </authorList>
    </citation>
    <scope>PROTEIN SEQUENCE</scope>
    <scope>SYNTHESIS</scope>
    <scope>FUNCTION</scope>
    <scope>BIOASSAY</scope>
    <scope>PYROGLUTAMATE FORMATION AT GLN-1</scope>
    <scope>MASS SPECTROMETRY</scope>
    <scope>STRUCTURE BY NMR</scope>
    <scope>DISULFIDE BONDS</scope>
    <source>
        <tissue>Venom</tissue>
    </source>
</reference>
<reference key="2">
    <citation type="journal article" date="2012" name="J. Proteomics">
        <title>Large-scale discovery of conopeptides and conoproteins in the injectable venom of a fish-hunting cone snail using a combined proteomic and transcriptomic approach.</title>
        <authorList>
            <person name="Violette A."/>
            <person name="Biass D."/>
            <person name="Dutertre S."/>
            <person name="Koua D."/>
            <person name="Piquemal D."/>
            <person name="Pierrat F."/>
            <person name="Stocklin R."/>
            <person name="Favreau P."/>
        </authorList>
    </citation>
    <scope>NUCLEOTIDE SEQUENCE [MRNA]</scope>
    <scope>PYROGLUTAMATE FORMATION AT GLN-1</scope>
    <scope>AMIDATION AT CYS-22</scope>
    <scope>MASS SPECTROMETRY</scope>
    <scope>IDENTIFICATION BY MASS SPECTROMETRY</scope>
    <source>
        <tissue>Venom</tissue>
        <tissue>Venom duct</tissue>
    </source>
</reference>
<reference key="3">
    <citation type="journal article" date="2018" name="Bioorg. Med. Chem.">
        <title>Peptide therapeutics from venom: Current status and potential.</title>
        <authorList>
            <person name="Pennington M.W."/>
            <person name="Czerwinski A."/>
            <person name="Norton R.S."/>
        </authorList>
    </citation>
    <scope>BIOTECHNOLOGY</scope>
    <scope>REVIEW</scope>
</reference>